<proteinExistence type="evidence at protein level"/>
<dbReference type="EMBL" id="AY685920">
    <property type="protein sequence ID" value="AAV65060.1"/>
    <property type="molecule type" value="Genomic_RNA"/>
</dbReference>
<dbReference type="EMBL" id="AY685921">
    <property type="protein sequence ID" value="AAV65069.1"/>
    <property type="molecule type" value="Genomic_RNA"/>
</dbReference>
<dbReference type="SMR" id="Q5SC54"/>
<dbReference type="Proteomes" id="UP000130023">
    <property type="component" value="Genome"/>
</dbReference>
<dbReference type="Proteomes" id="UP000181577">
    <property type="component" value="Genome"/>
</dbReference>
<dbReference type="GO" id="GO:0044423">
    <property type="term" value="C:virion component"/>
    <property type="evidence" value="ECO:0007669"/>
    <property type="project" value="UniProtKB-KW"/>
</dbReference>
<dbReference type="GO" id="GO:0039660">
    <property type="term" value="F:structural constituent of virion"/>
    <property type="evidence" value="ECO:0007669"/>
    <property type="project" value="UniProtKB-KW"/>
</dbReference>
<dbReference type="GO" id="GO:0019068">
    <property type="term" value="P:virion assembly"/>
    <property type="evidence" value="ECO:0007669"/>
    <property type="project" value="InterPro"/>
</dbReference>
<dbReference type="Gene3D" id="2.70.20.60">
    <property type="entry name" value="Viral matrix protein, C-terminal domain"/>
    <property type="match status" value="1"/>
</dbReference>
<dbReference type="Gene3D" id="2.70.20.50">
    <property type="entry name" value="Viral matrix protein, N-terminal domain"/>
    <property type="match status" value="1"/>
</dbReference>
<dbReference type="InterPro" id="IPR042539">
    <property type="entry name" value="Matrix_C"/>
</dbReference>
<dbReference type="InterPro" id="IPR042540">
    <property type="entry name" value="Matrix_N"/>
</dbReference>
<dbReference type="InterPro" id="IPR055413">
    <property type="entry name" value="Matrix_Paramyxo_C"/>
</dbReference>
<dbReference type="InterPro" id="IPR000982">
    <property type="entry name" value="Matrix_Paramyxo_N"/>
</dbReference>
<dbReference type="Pfam" id="PF23765">
    <property type="entry name" value="Matrix_Paramyxo_C"/>
    <property type="match status" value="1"/>
</dbReference>
<dbReference type="Pfam" id="PF00661">
    <property type="entry name" value="Matrix_Paramyxo_N"/>
    <property type="match status" value="1"/>
</dbReference>
<comment type="function">
    <text evidence="1">The M protein has a crucial role in virus assembly and interacts with the RNP complex as well as with the viral membrane.</text>
</comment>
<comment type="subcellular location">
    <subcellularLocation>
        <location evidence="2 3">Virion</location>
    </subcellularLocation>
</comment>
<comment type="similarity">
    <text evidence="4">Belongs to the morbillivirus/respirovirus/rubulavirus M protein family.</text>
</comment>
<name>MATRX_MUMPZ</name>
<sequence>MAGSQIKIPLPKPPDSDSQRLNAFPIIMAQEGKGRLLRQIRLRKILSGDPSDQQITFVNTYGFIRATPETSEFISESSPQKVTPVVTACMLSFGAGPVLEDPQHMLKALDQTDIRVRKTASDKEQILFEINRIPNLFRHHQISADHLIQASSDKYVKSPAKLIAGVNYIYCVTFLSVTVCSASLKFRVARPLLAARSRLVRAVQMEVLLRVTCKKDSQMAKSMLNDPEGEGCIASVWFHLCNLCKGRNKLRSYDENYFASKCRKMNLTVSIGDMWGPTILVHAGGHIPTTAKPFFNSRGWVCHPIHQSSPSLAKTLWSSGCEIKAASAILQGSDYASLAKTDDIIYSKIKVDKDAANYKGVSWSPFRKSASMSNL</sequence>
<evidence type="ECO:0000250" key="1">
    <source>
        <dbReference type="UniProtKB" id="Q9W850"/>
    </source>
</evidence>
<evidence type="ECO:0000269" key="2">
    <source>
    </source>
</evidence>
<evidence type="ECO:0000269" key="3">
    <source>
    </source>
</evidence>
<evidence type="ECO:0000305" key="4"/>
<reference key="1">
    <citation type="journal article" date="2005" name="Virus Res.">
        <title>Genetic characterization of L-Zagreb mumps vaccine strain.</title>
        <authorList>
            <person name="Ivancic J."/>
            <person name="Kosutic Gulija T."/>
            <person name="Forcic D."/>
            <person name="Baricevic M."/>
            <person name="Jug R."/>
            <person name="Mesko-Prejac M."/>
            <person name="Mazuran R."/>
        </authorList>
    </citation>
    <scope>NUCLEOTIDE SEQUENCE [GENOMIC RNA]</scope>
    <source>
        <strain>L-Zagreb vaccine</strain>
    </source>
</reference>
<reference key="2">
    <citation type="journal article" date="2016" name="Virol. J.">
        <title>Identification of mumps virus protein and lipid composition by mass spectrometry.</title>
        <authorList>
            <person name="Brgles M."/>
            <person name="Bonta M."/>
            <person name="Santak M."/>
            <person name="Jagusic M."/>
            <person name="Forcic D."/>
            <person name="Halassy B."/>
            <person name="Allmaier G."/>
            <person name="Marchetti-Deschmann M."/>
        </authorList>
    </citation>
    <scope>IDENTIFICATION BY MASS SPECTROMETRY</scope>
    <scope>SUBCELLULAR LOCATION</scope>
    <source>
        <strain>L-Zagreb vaccine</strain>
    </source>
</reference>
<reference key="3">
    <citation type="journal article" date="2018" name="Virol. J.">
        <title>Mass spectrometry-based investigation of measles and mumps virus proteome.</title>
        <authorList>
            <person name="Sviben D."/>
            <person name="Forcic D."/>
            <person name="Halassy B."/>
            <person name="Allmaier G."/>
            <person name="Marchetti-Deschmann M."/>
            <person name="Brgles M."/>
        </authorList>
    </citation>
    <scope>IDENTIFICATION BY MASS SPECTROMETRY</scope>
    <scope>SUBCELLULAR LOCATION</scope>
    <source>
        <strain>L-Zagreb vaccine</strain>
    </source>
</reference>
<accession>Q5SC54</accession>
<keyword id="KW-0468">Viral matrix protein</keyword>
<keyword id="KW-0946">Virion</keyword>
<protein>
    <recommendedName>
        <fullName>Matrix protein</fullName>
    </recommendedName>
</protein>
<feature type="chain" id="PRO_0000462028" description="Matrix protein">
    <location>
        <begin position="1"/>
        <end position="375"/>
    </location>
</feature>
<organismHost>
    <name type="scientific">Homo sapiens</name>
    <name type="common">Human</name>
    <dbReference type="NCBI Taxonomy" id="9606"/>
</organismHost>
<organism>
    <name type="scientific">Mumps virus genotype N (strain L-Zagreb vaccine)</name>
    <name type="common">MuV</name>
    <dbReference type="NCBI Taxonomy" id="301186"/>
    <lineage>
        <taxon>Viruses</taxon>
        <taxon>Riboviria</taxon>
        <taxon>Orthornavirae</taxon>
        <taxon>Negarnaviricota</taxon>
        <taxon>Haploviricotina</taxon>
        <taxon>Monjiviricetes</taxon>
        <taxon>Mononegavirales</taxon>
        <taxon>Paramyxoviridae</taxon>
        <taxon>Rubulavirinae</taxon>
        <taxon>Orthorubulavirus</taxon>
        <taxon>Orthorubulavirus parotitidis</taxon>
        <taxon>Mumps orthorubulavirus</taxon>
    </lineage>
</organism>
<gene>
    <name type="primary">M</name>
</gene>